<organism>
    <name type="scientific">Escherichia coli (strain UTI89 / UPEC)</name>
    <dbReference type="NCBI Taxonomy" id="364106"/>
    <lineage>
        <taxon>Bacteria</taxon>
        <taxon>Pseudomonadati</taxon>
        <taxon>Pseudomonadota</taxon>
        <taxon>Gammaproteobacteria</taxon>
        <taxon>Enterobacterales</taxon>
        <taxon>Enterobacteriaceae</taxon>
        <taxon>Escherichia</taxon>
    </lineage>
</organism>
<reference key="1">
    <citation type="journal article" date="2006" name="Proc. Natl. Acad. Sci. U.S.A.">
        <title>Identification of genes subject to positive selection in uropathogenic strains of Escherichia coli: a comparative genomics approach.</title>
        <authorList>
            <person name="Chen S.L."/>
            <person name="Hung C.-S."/>
            <person name="Xu J."/>
            <person name="Reigstad C.S."/>
            <person name="Magrini V."/>
            <person name="Sabo A."/>
            <person name="Blasiar D."/>
            <person name="Bieri T."/>
            <person name="Meyer R.R."/>
            <person name="Ozersky P."/>
            <person name="Armstrong J.R."/>
            <person name="Fulton R.S."/>
            <person name="Latreille J.P."/>
            <person name="Spieth J."/>
            <person name="Hooton T.M."/>
            <person name="Mardis E.R."/>
            <person name="Hultgren S.J."/>
            <person name="Gordon J.I."/>
        </authorList>
    </citation>
    <scope>NUCLEOTIDE SEQUENCE [LARGE SCALE GENOMIC DNA]</scope>
    <source>
        <strain>UTI89 / UPEC</strain>
    </source>
</reference>
<gene>
    <name evidence="1" type="primary">rutF</name>
    <name type="synonym">nmoB</name>
    <name type="ordered locus">UTI89_C1070</name>
</gene>
<feature type="chain" id="PRO_0000403007" description="FMN reductase (NADH) RutF">
    <location>
        <begin position="1"/>
        <end position="191"/>
    </location>
</feature>
<sequence length="191" mass="20636">MAIPANFLRACHVCPLKKPAGCCKEQTMNIVDQQTFRDAMSCMGAAVNIITTDGPAGRAGFTASAVCSVTDTPPTLLVCLNRGASVWPVFNENRTLCVNTLSAGQEPLSNLFGGKTPMELRFAAARWQTGVTGCPQLEEALVSFDCRISQVVSVGTHDILFCAIEAIHRHATPYGLVWFDRSYHALMRPAC</sequence>
<keyword id="KW-0285">Flavoprotein</keyword>
<keyword id="KW-0288">FMN</keyword>
<keyword id="KW-0520">NAD</keyword>
<keyword id="KW-0560">Oxidoreductase</keyword>
<protein>
    <recommendedName>
        <fullName evidence="1">FMN reductase (NADH) RutF</fullName>
        <ecNumber evidence="1">1.5.1.42</ecNumber>
    </recommendedName>
    <alternativeName>
        <fullName evidence="1">FMN reductase</fullName>
    </alternativeName>
    <alternativeName>
        <fullName evidence="1">NADH-flavin reductase RutF</fullName>
    </alternativeName>
    <alternativeName>
        <fullName evidence="1">NADH:flavin oxidoreductase</fullName>
    </alternativeName>
</protein>
<dbReference type="EC" id="1.5.1.42" evidence="1"/>
<dbReference type="EMBL" id="CP000243">
    <property type="protein sequence ID" value="ABE06554.1"/>
    <property type="molecule type" value="Genomic_DNA"/>
</dbReference>
<dbReference type="SMR" id="Q1RDL0"/>
<dbReference type="KEGG" id="eci:UTI89_C1070"/>
<dbReference type="HOGENOM" id="CLU_059021_2_2_6"/>
<dbReference type="Proteomes" id="UP000001952">
    <property type="component" value="Chromosome"/>
</dbReference>
<dbReference type="GO" id="GO:0010181">
    <property type="term" value="F:FMN binding"/>
    <property type="evidence" value="ECO:0007669"/>
    <property type="project" value="InterPro"/>
</dbReference>
<dbReference type="GO" id="GO:0052874">
    <property type="term" value="F:FMN reductase (NADH) activity"/>
    <property type="evidence" value="ECO:0007669"/>
    <property type="project" value="UniProtKB-EC"/>
</dbReference>
<dbReference type="GO" id="GO:0008752">
    <property type="term" value="F:FMN reductase [NAD(P)H] activity"/>
    <property type="evidence" value="ECO:0007669"/>
    <property type="project" value="InterPro"/>
</dbReference>
<dbReference type="GO" id="GO:0042602">
    <property type="term" value="F:riboflavin reductase (NADPH) activity"/>
    <property type="evidence" value="ECO:0007669"/>
    <property type="project" value="UniProtKB-UniRule"/>
</dbReference>
<dbReference type="GO" id="GO:0019740">
    <property type="term" value="P:nitrogen utilization"/>
    <property type="evidence" value="ECO:0007669"/>
    <property type="project" value="UniProtKB-UniRule"/>
</dbReference>
<dbReference type="GO" id="GO:0006212">
    <property type="term" value="P:uracil catabolic process"/>
    <property type="evidence" value="ECO:0007669"/>
    <property type="project" value="UniProtKB-UniRule"/>
</dbReference>
<dbReference type="FunFam" id="2.30.110.10:FF:000002">
    <property type="entry name" value="FMN reductase (NADH) RutF"/>
    <property type="match status" value="1"/>
</dbReference>
<dbReference type="Gene3D" id="2.30.110.10">
    <property type="entry name" value="Electron Transport, Fmn-binding Protein, Chain A"/>
    <property type="match status" value="1"/>
</dbReference>
<dbReference type="HAMAP" id="MF_00833">
    <property type="entry name" value="RutF"/>
    <property type="match status" value="1"/>
</dbReference>
<dbReference type="InterPro" id="IPR002563">
    <property type="entry name" value="Flavin_Rdtase-like_dom"/>
</dbReference>
<dbReference type="InterPro" id="IPR050268">
    <property type="entry name" value="NADH-dep_flavin_reductase"/>
</dbReference>
<dbReference type="InterPro" id="IPR019917">
    <property type="entry name" value="RutF"/>
</dbReference>
<dbReference type="InterPro" id="IPR012349">
    <property type="entry name" value="Split_barrel_FMN-bd"/>
</dbReference>
<dbReference type="NCBIfam" id="TIGR03615">
    <property type="entry name" value="RutF"/>
    <property type="match status" value="1"/>
</dbReference>
<dbReference type="PANTHER" id="PTHR30466">
    <property type="entry name" value="FLAVIN REDUCTASE"/>
    <property type="match status" value="1"/>
</dbReference>
<dbReference type="PANTHER" id="PTHR30466:SF1">
    <property type="entry name" value="FMN REDUCTASE (NADH) RUTF"/>
    <property type="match status" value="1"/>
</dbReference>
<dbReference type="Pfam" id="PF01613">
    <property type="entry name" value="Flavin_Reduct"/>
    <property type="match status" value="1"/>
</dbReference>
<dbReference type="SMART" id="SM00903">
    <property type="entry name" value="Flavin_Reduct"/>
    <property type="match status" value="1"/>
</dbReference>
<dbReference type="SUPFAM" id="SSF50475">
    <property type="entry name" value="FMN-binding split barrel"/>
    <property type="match status" value="1"/>
</dbReference>
<proteinExistence type="inferred from homology"/>
<comment type="function">
    <text evidence="1">Catalyzes the reduction of FMN to FMNH2 which is used to reduce pyrimidine by RutA via the Rut pathway.</text>
</comment>
<comment type="catalytic activity">
    <reaction evidence="1">
        <text>FMNH2 + NAD(+) = FMN + NADH + 2 H(+)</text>
        <dbReference type="Rhea" id="RHEA:21620"/>
        <dbReference type="ChEBI" id="CHEBI:15378"/>
        <dbReference type="ChEBI" id="CHEBI:57540"/>
        <dbReference type="ChEBI" id="CHEBI:57618"/>
        <dbReference type="ChEBI" id="CHEBI:57945"/>
        <dbReference type="ChEBI" id="CHEBI:58210"/>
        <dbReference type="EC" id="1.5.1.42"/>
    </reaction>
</comment>
<comment type="induction">
    <text evidence="1">Up-regulated by the nitrogen regulatory protein C (NtrC also called GlnG) and repressed by RutR.</text>
</comment>
<comment type="similarity">
    <text evidence="1">Belongs to the non-flavoprotein flavin reductase family. RutF subfamily.</text>
</comment>
<evidence type="ECO:0000255" key="1">
    <source>
        <dbReference type="HAMAP-Rule" id="MF_00833"/>
    </source>
</evidence>
<accession>Q1RDL0</accession>
<name>RUTF_ECOUT</name>